<organism>
    <name type="scientific">Nitratiruptor sp. (strain SB155-2)</name>
    <dbReference type="NCBI Taxonomy" id="387092"/>
    <lineage>
        <taxon>Bacteria</taxon>
        <taxon>Pseudomonadati</taxon>
        <taxon>Campylobacterota</taxon>
        <taxon>Epsilonproteobacteria</taxon>
        <taxon>Nautiliales</taxon>
        <taxon>Nitratiruptoraceae</taxon>
        <taxon>Nitratiruptor</taxon>
    </lineage>
</organism>
<feature type="chain" id="PRO_1000075782" description="Ribonuclease 3">
    <location>
        <begin position="1"/>
        <end position="226"/>
    </location>
</feature>
<feature type="domain" description="RNase III" evidence="1">
    <location>
        <begin position="4"/>
        <end position="127"/>
    </location>
</feature>
<feature type="domain" description="DRBM" evidence="1">
    <location>
        <begin position="154"/>
        <end position="223"/>
    </location>
</feature>
<feature type="active site" evidence="1">
    <location>
        <position position="44"/>
    </location>
</feature>
<feature type="active site" evidence="1">
    <location>
        <position position="116"/>
    </location>
</feature>
<feature type="binding site" evidence="1">
    <location>
        <position position="40"/>
    </location>
    <ligand>
        <name>Mg(2+)</name>
        <dbReference type="ChEBI" id="CHEBI:18420"/>
    </ligand>
</feature>
<feature type="binding site" evidence="1">
    <location>
        <position position="113"/>
    </location>
    <ligand>
        <name>Mg(2+)</name>
        <dbReference type="ChEBI" id="CHEBI:18420"/>
    </ligand>
</feature>
<feature type="binding site" evidence="1">
    <location>
        <position position="116"/>
    </location>
    <ligand>
        <name>Mg(2+)</name>
        <dbReference type="ChEBI" id="CHEBI:18420"/>
    </ligand>
</feature>
<comment type="function">
    <text evidence="1">Digests double-stranded RNA. Involved in the processing of primary rRNA transcript to yield the immediate precursors to the large and small rRNAs (23S and 16S). Processes some mRNAs, and tRNAs when they are encoded in the rRNA operon. Processes pre-crRNA and tracrRNA of type II CRISPR loci if present in the organism.</text>
</comment>
<comment type="catalytic activity">
    <reaction evidence="1">
        <text>Endonucleolytic cleavage to 5'-phosphomonoester.</text>
        <dbReference type="EC" id="3.1.26.3"/>
    </reaction>
</comment>
<comment type="cofactor">
    <cofactor evidence="1">
        <name>Mg(2+)</name>
        <dbReference type="ChEBI" id="CHEBI:18420"/>
    </cofactor>
</comment>
<comment type="subunit">
    <text evidence="1">Homodimer.</text>
</comment>
<comment type="subcellular location">
    <subcellularLocation>
        <location evidence="1">Cytoplasm</location>
    </subcellularLocation>
</comment>
<comment type="similarity">
    <text evidence="1">Belongs to the ribonuclease III family.</text>
</comment>
<sequence length="226" mass="25548">MKQLEEFEKKLGYSFEDKKLLKEALTHKSYKSPVNNERLEFLGDAVLDLVVGEYLFKKFPKANEGELSKLRASLVNEEGFAKLAQKLDIGKYIFISQAEENNQGRTKPSLLSNAFEAVMGAIYLEKGLEKVRELSLKLLEEAYPKIDLDSLFKDFKTALQEFTQAHYGITPTYKLLGSSGPDHKKEFEVAVLLHEETISTAKGRSKKAAQQEAAKEALKILKARNE</sequence>
<keyword id="KW-0963">Cytoplasm</keyword>
<keyword id="KW-0255">Endonuclease</keyword>
<keyword id="KW-0378">Hydrolase</keyword>
<keyword id="KW-0460">Magnesium</keyword>
<keyword id="KW-0479">Metal-binding</keyword>
<keyword id="KW-0507">mRNA processing</keyword>
<keyword id="KW-0540">Nuclease</keyword>
<keyword id="KW-1185">Reference proteome</keyword>
<keyword id="KW-0694">RNA-binding</keyword>
<keyword id="KW-0698">rRNA processing</keyword>
<keyword id="KW-0699">rRNA-binding</keyword>
<keyword id="KW-0819">tRNA processing</keyword>
<name>RNC_NITSB</name>
<protein>
    <recommendedName>
        <fullName evidence="1">Ribonuclease 3</fullName>
        <ecNumber evidence="1">3.1.26.3</ecNumber>
    </recommendedName>
    <alternativeName>
        <fullName evidence="1">Ribonuclease III</fullName>
        <shortName evidence="1">RNase III</shortName>
    </alternativeName>
</protein>
<gene>
    <name evidence="1" type="primary">rnc</name>
    <name type="ordered locus">NIS_0215</name>
</gene>
<reference key="1">
    <citation type="journal article" date="2007" name="Proc. Natl. Acad. Sci. U.S.A.">
        <title>Deep-sea vent epsilon-proteobacterial genomes provide insights into emergence of pathogens.</title>
        <authorList>
            <person name="Nakagawa S."/>
            <person name="Takaki Y."/>
            <person name="Shimamura S."/>
            <person name="Reysenbach A.-L."/>
            <person name="Takai K."/>
            <person name="Horikoshi K."/>
        </authorList>
    </citation>
    <scope>NUCLEOTIDE SEQUENCE [LARGE SCALE GENOMIC DNA]</scope>
    <source>
        <strain>SB155-2</strain>
    </source>
</reference>
<accession>A6Q1H0</accession>
<evidence type="ECO:0000255" key="1">
    <source>
        <dbReference type="HAMAP-Rule" id="MF_00104"/>
    </source>
</evidence>
<proteinExistence type="inferred from homology"/>
<dbReference type="EC" id="3.1.26.3" evidence="1"/>
<dbReference type="EMBL" id="AP009178">
    <property type="protein sequence ID" value="BAF69329.1"/>
    <property type="molecule type" value="Genomic_DNA"/>
</dbReference>
<dbReference type="RefSeq" id="WP_012081592.1">
    <property type="nucleotide sequence ID" value="NC_009662.1"/>
</dbReference>
<dbReference type="SMR" id="A6Q1H0"/>
<dbReference type="FunCoup" id="A6Q1H0">
    <property type="interactions" value="400"/>
</dbReference>
<dbReference type="STRING" id="387092.NIS_0215"/>
<dbReference type="KEGG" id="nis:NIS_0215"/>
<dbReference type="eggNOG" id="COG0571">
    <property type="taxonomic scope" value="Bacteria"/>
</dbReference>
<dbReference type="HOGENOM" id="CLU_000907_1_3_7"/>
<dbReference type="InParanoid" id="A6Q1H0"/>
<dbReference type="OrthoDB" id="9805026at2"/>
<dbReference type="Proteomes" id="UP000001118">
    <property type="component" value="Chromosome"/>
</dbReference>
<dbReference type="GO" id="GO:0005737">
    <property type="term" value="C:cytoplasm"/>
    <property type="evidence" value="ECO:0007669"/>
    <property type="project" value="UniProtKB-SubCell"/>
</dbReference>
<dbReference type="GO" id="GO:0003725">
    <property type="term" value="F:double-stranded RNA binding"/>
    <property type="evidence" value="ECO:0007669"/>
    <property type="project" value="TreeGrafter"/>
</dbReference>
<dbReference type="GO" id="GO:0046872">
    <property type="term" value="F:metal ion binding"/>
    <property type="evidence" value="ECO:0007669"/>
    <property type="project" value="UniProtKB-KW"/>
</dbReference>
<dbReference type="GO" id="GO:0004525">
    <property type="term" value="F:ribonuclease III activity"/>
    <property type="evidence" value="ECO:0007669"/>
    <property type="project" value="UniProtKB-UniRule"/>
</dbReference>
<dbReference type="GO" id="GO:0019843">
    <property type="term" value="F:rRNA binding"/>
    <property type="evidence" value="ECO:0007669"/>
    <property type="project" value="UniProtKB-KW"/>
</dbReference>
<dbReference type="GO" id="GO:0006397">
    <property type="term" value="P:mRNA processing"/>
    <property type="evidence" value="ECO:0007669"/>
    <property type="project" value="UniProtKB-UniRule"/>
</dbReference>
<dbReference type="GO" id="GO:0010468">
    <property type="term" value="P:regulation of gene expression"/>
    <property type="evidence" value="ECO:0007669"/>
    <property type="project" value="TreeGrafter"/>
</dbReference>
<dbReference type="GO" id="GO:0006364">
    <property type="term" value="P:rRNA processing"/>
    <property type="evidence" value="ECO:0007669"/>
    <property type="project" value="UniProtKB-UniRule"/>
</dbReference>
<dbReference type="GO" id="GO:0008033">
    <property type="term" value="P:tRNA processing"/>
    <property type="evidence" value="ECO:0007669"/>
    <property type="project" value="UniProtKB-KW"/>
</dbReference>
<dbReference type="CDD" id="cd10845">
    <property type="entry name" value="DSRM_RNAse_III_family"/>
    <property type="match status" value="1"/>
</dbReference>
<dbReference type="CDD" id="cd00593">
    <property type="entry name" value="RIBOc"/>
    <property type="match status" value="1"/>
</dbReference>
<dbReference type="FunFam" id="1.10.1520.10:FF:000001">
    <property type="entry name" value="Ribonuclease 3"/>
    <property type="match status" value="1"/>
</dbReference>
<dbReference type="FunFam" id="3.30.160.20:FF:000003">
    <property type="entry name" value="Ribonuclease 3"/>
    <property type="match status" value="1"/>
</dbReference>
<dbReference type="Gene3D" id="3.30.160.20">
    <property type="match status" value="1"/>
</dbReference>
<dbReference type="Gene3D" id="1.10.1520.10">
    <property type="entry name" value="Ribonuclease III domain"/>
    <property type="match status" value="1"/>
</dbReference>
<dbReference type="HAMAP" id="MF_00104">
    <property type="entry name" value="RNase_III"/>
    <property type="match status" value="1"/>
</dbReference>
<dbReference type="InterPro" id="IPR014720">
    <property type="entry name" value="dsRBD_dom"/>
</dbReference>
<dbReference type="InterPro" id="IPR011907">
    <property type="entry name" value="RNase_III"/>
</dbReference>
<dbReference type="InterPro" id="IPR000999">
    <property type="entry name" value="RNase_III_dom"/>
</dbReference>
<dbReference type="InterPro" id="IPR036389">
    <property type="entry name" value="RNase_III_sf"/>
</dbReference>
<dbReference type="NCBIfam" id="TIGR02191">
    <property type="entry name" value="RNaseIII"/>
    <property type="match status" value="1"/>
</dbReference>
<dbReference type="PANTHER" id="PTHR11207:SF0">
    <property type="entry name" value="RIBONUCLEASE 3"/>
    <property type="match status" value="1"/>
</dbReference>
<dbReference type="PANTHER" id="PTHR11207">
    <property type="entry name" value="RIBONUCLEASE III"/>
    <property type="match status" value="1"/>
</dbReference>
<dbReference type="Pfam" id="PF00035">
    <property type="entry name" value="dsrm"/>
    <property type="match status" value="1"/>
</dbReference>
<dbReference type="Pfam" id="PF14622">
    <property type="entry name" value="Ribonucleas_3_3"/>
    <property type="match status" value="1"/>
</dbReference>
<dbReference type="SMART" id="SM00358">
    <property type="entry name" value="DSRM"/>
    <property type="match status" value="1"/>
</dbReference>
<dbReference type="SMART" id="SM00535">
    <property type="entry name" value="RIBOc"/>
    <property type="match status" value="1"/>
</dbReference>
<dbReference type="SUPFAM" id="SSF54768">
    <property type="entry name" value="dsRNA-binding domain-like"/>
    <property type="match status" value="1"/>
</dbReference>
<dbReference type="SUPFAM" id="SSF69065">
    <property type="entry name" value="RNase III domain-like"/>
    <property type="match status" value="1"/>
</dbReference>
<dbReference type="PROSITE" id="PS50137">
    <property type="entry name" value="DS_RBD"/>
    <property type="match status" value="1"/>
</dbReference>
<dbReference type="PROSITE" id="PS00517">
    <property type="entry name" value="RNASE_3_1"/>
    <property type="match status" value="1"/>
</dbReference>
<dbReference type="PROSITE" id="PS50142">
    <property type="entry name" value="RNASE_3_2"/>
    <property type="match status" value="1"/>
</dbReference>